<organism>
    <name type="scientific">Cycas revoluta</name>
    <name type="common">Sago palm</name>
    <dbReference type="NCBI Taxonomy" id="3396"/>
    <lineage>
        <taxon>Eukaryota</taxon>
        <taxon>Viridiplantae</taxon>
        <taxon>Streptophyta</taxon>
        <taxon>Embryophyta</taxon>
        <taxon>Tracheophyta</taxon>
        <taxon>Spermatophyta</taxon>
        <taxon>Cycadidae</taxon>
        <taxon>Cycadales</taxon>
        <taxon>Cycadaceae</taxon>
        <taxon>Cycas</taxon>
    </lineage>
</organism>
<name>ACP1_CYCRE</name>
<feature type="peptide" id="PRO_0000415956" description="Anticancerous peptide 1" evidence="1">
    <location>
        <begin position="1"/>
        <end position="9"/>
    </location>
</feature>
<proteinExistence type="evidence at protein level"/>
<protein>
    <recommendedName>
        <fullName evidence="2">Anticancerous peptide 1</fullName>
        <shortName evidence="2">Cr-ACP1</shortName>
    </recommendedName>
</protein>
<sequence>AWKLFDDGV</sequence>
<accession>B3EWE7</accession>
<evidence type="ECO:0000269" key="1">
    <source>
    </source>
</evidence>
<evidence type="ECO:0000303" key="2">
    <source>
    </source>
</evidence>
<evidence type="ECO:0000305" key="3"/>
<keyword id="KW-0044">Antibiotic</keyword>
<keyword id="KW-0929">Antimicrobial</keyword>
<keyword id="KW-0903">Direct protein sequencing</keyword>
<keyword id="KW-0238">DNA-binding</keyword>
<dbReference type="GO" id="GO:0003677">
    <property type="term" value="F:DNA binding"/>
    <property type="evidence" value="ECO:0007669"/>
    <property type="project" value="UniProtKB-KW"/>
</dbReference>
<dbReference type="GO" id="GO:0042742">
    <property type="term" value="P:defense response to bacterium"/>
    <property type="evidence" value="ECO:0007669"/>
    <property type="project" value="UniProtKB-KW"/>
</dbReference>
<reference evidence="3" key="1">
    <citation type="journal article" date="2012" name="J. Cell. Biochem.">
        <title>Identification and characterization of a bactericidal and proapoptotic peptide from cycas revoluta seeds with DNA binding properties.</title>
        <authorList>
            <person name="Mandal S.M."/>
            <person name="Migliolo L."/>
            <person name="Das S."/>
            <person name="Mandal M."/>
            <person name="Franco O.L."/>
            <person name="Hazra T.K."/>
        </authorList>
    </citation>
    <scope>PROTEIN SEQUENCE</scope>
    <scope>SYNTHESIS</scope>
    <scope>FUNCTION</scope>
    <scope>MASS SPECTROMETRY</scope>
    <source>
        <tissue evidence="1">Seed</tissue>
    </source>
</reference>
<comment type="function">
    <text evidence="1">The synthetic peptide inhibits cell proliferation and induces apoptosis in cancer-derived cell lines Hep2 (IC(50)=1.5 mM) and HCT15 and, to a lesser extent, in non-cancerous NIH/3T3 cells. The mode of action is presumably an arrest in the G0/G1 phase. Has DNA-binding activity. Antiproliferative, proapoptotic and DNA-binding activities are increased by acetylation at Ala-1 and Lys-3. Has no hemolytic activity against mouse erythrocytes. Has antibacterial activity against S.epidermitis (MIC=60 ug), B.subtilis (MIC=30 ug), P.aeruginosa (MIC=30 ug) and E.coli strain ATCC 8739 (MIC=30 ug). Antibacterial activity is decreased by acetylation.</text>
</comment>
<comment type="mass spectrometry"/>